<comment type="function">
    <text evidence="1">Involved in the binding of tRNA to the ribosomes.</text>
</comment>
<comment type="subunit">
    <text evidence="1">Part of the 30S ribosomal subunit.</text>
</comment>
<comment type="similarity">
    <text evidence="1">Belongs to the universal ribosomal protein uS10 family.</text>
</comment>
<feature type="chain" id="PRO_0000146651" description="Small ribosomal subunit protein uS10">
    <location>
        <begin position="1"/>
        <end position="102"/>
    </location>
</feature>
<dbReference type="EMBL" id="AE000666">
    <property type="protein sequence ID" value="AAB85550.1"/>
    <property type="molecule type" value="Genomic_DNA"/>
</dbReference>
<dbReference type="PIR" id="G69007">
    <property type="entry name" value="G69007"/>
</dbReference>
<dbReference type="SMR" id="O27133"/>
<dbReference type="FunCoup" id="O27133">
    <property type="interactions" value="147"/>
</dbReference>
<dbReference type="STRING" id="187420.MTH_1059"/>
<dbReference type="PaxDb" id="187420-MTH_1059"/>
<dbReference type="EnsemblBacteria" id="AAB85550">
    <property type="protein sequence ID" value="AAB85550"/>
    <property type="gene ID" value="MTH_1059"/>
</dbReference>
<dbReference type="KEGG" id="mth:MTH_1059"/>
<dbReference type="PATRIC" id="fig|187420.15.peg.1038"/>
<dbReference type="HOGENOM" id="CLU_122625_0_1_2"/>
<dbReference type="InParanoid" id="O27133"/>
<dbReference type="Proteomes" id="UP000005223">
    <property type="component" value="Chromosome"/>
</dbReference>
<dbReference type="GO" id="GO:0015935">
    <property type="term" value="C:small ribosomal subunit"/>
    <property type="evidence" value="ECO:0007669"/>
    <property type="project" value="InterPro"/>
</dbReference>
<dbReference type="GO" id="GO:0003735">
    <property type="term" value="F:structural constituent of ribosome"/>
    <property type="evidence" value="ECO:0007669"/>
    <property type="project" value="InterPro"/>
</dbReference>
<dbReference type="GO" id="GO:0000049">
    <property type="term" value="F:tRNA binding"/>
    <property type="evidence" value="ECO:0007669"/>
    <property type="project" value="UniProtKB-UniRule"/>
</dbReference>
<dbReference type="GO" id="GO:0006412">
    <property type="term" value="P:translation"/>
    <property type="evidence" value="ECO:0007669"/>
    <property type="project" value="UniProtKB-UniRule"/>
</dbReference>
<dbReference type="FunFam" id="3.30.70.600:FF:000004">
    <property type="entry name" value="30S ribosomal protein S10"/>
    <property type="match status" value="1"/>
</dbReference>
<dbReference type="Gene3D" id="3.30.70.600">
    <property type="entry name" value="Ribosomal protein S10 domain"/>
    <property type="match status" value="1"/>
</dbReference>
<dbReference type="HAMAP" id="MF_00508">
    <property type="entry name" value="Ribosomal_uS10"/>
    <property type="match status" value="1"/>
</dbReference>
<dbReference type="InterPro" id="IPR001848">
    <property type="entry name" value="Ribosomal_uS10"/>
</dbReference>
<dbReference type="InterPro" id="IPR018268">
    <property type="entry name" value="Ribosomal_uS10_CS"/>
</dbReference>
<dbReference type="InterPro" id="IPR027486">
    <property type="entry name" value="Ribosomal_uS10_dom"/>
</dbReference>
<dbReference type="InterPro" id="IPR036838">
    <property type="entry name" value="Ribosomal_uS10_dom_sf"/>
</dbReference>
<dbReference type="InterPro" id="IPR005729">
    <property type="entry name" value="Ribosomal_uS10_euk/arc"/>
</dbReference>
<dbReference type="NCBIfam" id="TIGR01046">
    <property type="entry name" value="uS10_euk_arch"/>
    <property type="match status" value="1"/>
</dbReference>
<dbReference type="PANTHER" id="PTHR11700">
    <property type="entry name" value="30S RIBOSOMAL PROTEIN S10 FAMILY MEMBER"/>
    <property type="match status" value="1"/>
</dbReference>
<dbReference type="Pfam" id="PF00338">
    <property type="entry name" value="Ribosomal_S10"/>
    <property type="match status" value="1"/>
</dbReference>
<dbReference type="PRINTS" id="PR00971">
    <property type="entry name" value="RIBOSOMALS10"/>
</dbReference>
<dbReference type="SMART" id="SM01403">
    <property type="entry name" value="Ribosomal_S10"/>
    <property type="match status" value="1"/>
</dbReference>
<dbReference type="SUPFAM" id="SSF54999">
    <property type="entry name" value="Ribosomal protein S10"/>
    <property type="match status" value="1"/>
</dbReference>
<dbReference type="PROSITE" id="PS00361">
    <property type="entry name" value="RIBOSOMAL_S10"/>
    <property type="match status" value="1"/>
</dbReference>
<sequence>MHKARIKLTGTDPEKLAYVCDQLKKIAERTGVDMSGPIPLPTKRLVVPTRKSPDGEGTATWEKWEMRIHKRLVGIEADERAMRQVMKVNVPDNVSIEIELKS</sequence>
<evidence type="ECO:0000255" key="1">
    <source>
        <dbReference type="HAMAP-Rule" id="MF_00508"/>
    </source>
</evidence>
<evidence type="ECO:0000305" key="2"/>
<gene>
    <name evidence="1" type="primary">rps10</name>
    <name type="ordered locus">MTH_1059</name>
</gene>
<organism>
    <name type="scientific">Methanothermobacter thermautotrophicus (strain ATCC 29096 / DSM 1053 / JCM 10044 / NBRC 100330 / Delta H)</name>
    <name type="common">Methanobacterium thermoautotrophicum</name>
    <dbReference type="NCBI Taxonomy" id="187420"/>
    <lineage>
        <taxon>Archaea</taxon>
        <taxon>Methanobacteriati</taxon>
        <taxon>Methanobacteriota</taxon>
        <taxon>Methanomada group</taxon>
        <taxon>Methanobacteria</taxon>
        <taxon>Methanobacteriales</taxon>
        <taxon>Methanobacteriaceae</taxon>
        <taxon>Methanothermobacter</taxon>
    </lineage>
</organism>
<proteinExistence type="inferred from homology"/>
<accession>O27133</accession>
<keyword id="KW-1185">Reference proteome</keyword>
<keyword id="KW-0687">Ribonucleoprotein</keyword>
<keyword id="KW-0689">Ribosomal protein</keyword>
<reference key="1">
    <citation type="journal article" date="1997" name="J. Bacteriol.">
        <title>Complete genome sequence of Methanobacterium thermoautotrophicum deltaH: functional analysis and comparative genomics.</title>
        <authorList>
            <person name="Smith D.R."/>
            <person name="Doucette-Stamm L.A."/>
            <person name="Deloughery C."/>
            <person name="Lee H.-M."/>
            <person name="Dubois J."/>
            <person name="Aldredge T."/>
            <person name="Bashirzadeh R."/>
            <person name="Blakely D."/>
            <person name="Cook R."/>
            <person name="Gilbert K."/>
            <person name="Harrison D."/>
            <person name="Hoang L."/>
            <person name="Keagle P."/>
            <person name="Lumm W."/>
            <person name="Pothier B."/>
            <person name="Qiu D."/>
            <person name="Spadafora R."/>
            <person name="Vicare R."/>
            <person name="Wang Y."/>
            <person name="Wierzbowski J."/>
            <person name="Gibson R."/>
            <person name="Jiwani N."/>
            <person name="Caruso A."/>
            <person name="Bush D."/>
            <person name="Safer H."/>
            <person name="Patwell D."/>
            <person name="Prabhakar S."/>
            <person name="McDougall S."/>
            <person name="Shimer G."/>
            <person name="Goyal A."/>
            <person name="Pietrovski S."/>
            <person name="Church G.M."/>
            <person name="Daniels C.J."/>
            <person name="Mao J.-I."/>
            <person name="Rice P."/>
            <person name="Noelling J."/>
            <person name="Reeve J.N."/>
        </authorList>
    </citation>
    <scope>NUCLEOTIDE SEQUENCE [LARGE SCALE GENOMIC DNA]</scope>
    <source>
        <strain>ATCC 29096 / DSM 1053 / JCM 10044 / NBRC 100330 / Delta H</strain>
    </source>
</reference>
<protein>
    <recommendedName>
        <fullName evidence="1">Small ribosomal subunit protein uS10</fullName>
    </recommendedName>
    <alternativeName>
        <fullName evidence="2">30S ribosomal protein S10</fullName>
    </alternativeName>
</protein>
<name>RS10_METTH</name>